<organism>
    <name type="scientific">Salmonella typhi</name>
    <dbReference type="NCBI Taxonomy" id="90370"/>
    <lineage>
        <taxon>Bacteria</taxon>
        <taxon>Pseudomonadati</taxon>
        <taxon>Pseudomonadota</taxon>
        <taxon>Gammaproteobacteria</taxon>
        <taxon>Enterobacterales</taxon>
        <taxon>Enterobacteriaceae</taxon>
        <taxon>Salmonella</taxon>
    </lineage>
</organism>
<protein>
    <recommendedName>
        <fullName>Uncharacterized protein YaeQ</fullName>
    </recommendedName>
</protein>
<proteinExistence type="predicted"/>
<accession>P0A1S7</accession>
<accession>O33809</accession>
<reference key="1">
    <citation type="journal article" date="2001" name="Nature">
        <title>Complete genome sequence of a multiple drug resistant Salmonella enterica serovar Typhi CT18.</title>
        <authorList>
            <person name="Parkhill J."/>
            <person name="Dougan G."/>
            <person name="James K.D."/>
            <person name="Thomson N.R."/>
            <person name="Pickard D."/>
            <person name="Wain J."/>
            <person name="Churcher C.M."/>
            <person name="Mungall K.L."/>
            <person name="Bentley S.D."/>
            <person name="Holden M.T.G."/>
            <person name="Sebaihia M."/>
            <person name="Baker S."/>
            <person name="Basham D."/>
            <person name="Brooks K."/>
            <person name="Chillingworth T."/>
            <person name="Connerton P."/>
            <person name="Cronin A."/>
            <person name="Davis P."/>
            <person name="Davies R.M."/>
            <person name="Dowd L."/>
            <person name="White N."/>
            <person name="Farrar J."/>
            <person name="Feltwell T."/>
            <person name="Hamlin N."/>
            <person name="Haque A."/>
            <person name="Hien T.T."/>
            <person name="Holroyd S."/>
            <person name="Jagels K."/>
            <person name="Krogh A."/>
            <person name="Larsen T.S."/>
            <person name="Leather S."/>
            <person name="Moule S."/>
            <person name="O'Gaora P."/>
            <person name="Parry C."/>
            <person name="Quail M.A."/>
            <person name="Rutherford K.M."/>
            <person name="Simmonds M."/>
            <person name="Skelton J."/>
            <person name="Stevens K."/>
            <person name="Whitehead S."/>
            <person name="Barrell B.G."/>
        </authorList>
    </citation>
    <scope>NUCLEOTIDE SEQUENCE [LARGE SCALE GENOMIC DNA]</scope>
    <source>
        <strain>CT18</strain>
    </source>
</reference>
<reference key="2">
    <citation type="journal article" date="2003" name="J. Bacteriol.">
        <title>Comparative genomics of Salmonella enterica serovar Typhi strains Ty2 and CT18.</title>
        <authorList>
            <person name="Deng W."/>
            <person name="Liou S.-R."/>
            <person name="Plunkett G. III"/>
            <person name="Mayhew G.F."/>
            <person name="Rose D.J."/>
            <person name="Burland V."/>
            <person name="Kodoyianni V."/>
            <person name="Schwartz D.C."/>
            <person name="Blattner F.R."/>
        </authorList>
    </citation>
    <scope>NUCLEOTIDE SEQUENCE [LARGE SCALE GENOMIC DNA]</scope>
    <source>
        <strain>ATCC 700931 / Ty2</strain>
    </source>
</reference>
<name>YAEQ_SALTI</name>
<dbReference type="EMBL" id="AL513382">
    <property type="protein sequence ID" value="CAD08698.1"/>
    <property type="molecule type" value="Genomic_DNA"/>
</dbReference>
<dbReference type="EMBL" id="AE014613">
    <property type="protein sequence ID" value="AAO67970.1"/>
    <property type="molecule type" value="Genomic_DNA"/>
</dbReference>
<dbReference type="RefSeq" id="NP_454847.1">
    <property type="nucleotide sequence ID" value="NC_003198.1"/>
</dbReference>
<dbReference type="RefSeq" id="WP_001185319.1">
    <property type="nucleotide sequence ID" value="NZ_WSUR01000060.1"/>
</dbReference>
<dbReference type="SMR" id="P0A1S7"/>
<dbReference type="STRING" id="220341.gene:17584296"/>
<dbReference type="KEGG" id="stt:t0241"/>
<dbReference type="KEGG" id="sty:STY0264"/>
<dbReference type="PATRIC" id="fig|220341.7.peg.265"/>
<dbReference type="eggNOG" id="COG4681">
    <property type="taxonomic scope" value="Bacteria"/>
</dbReference>
<dbReference type="HOGENOM" id="CLU_096741_0_0_6"/>
<dbReference type="OMA" id="DERMMIR"/>
<dbReference type="OrthoDB" id="5293309at2"/>
<dbReference type="Proteomes" id="UP000000541">
    <property type="component" value="Chromosome"/>
</dbReference>
<dbReference type="Proteomes" id="UP000002670">
    <property type="component" value="Chromosome"/>
</dbReference>
<dbReference type="CDD" id="cd22368">
    <property type="entry name" value="YaeQ-like"/>
    <property type="match status" value="1"/>
</dbReference>
<dbReference type="Gene3D" id="3.10.640.10">
    <property type="entry name" value="Restriction endonuclease-like alpha-beta roll domain"/>
    <property type="match status" value="1"/>
</dbReference>
<dbReference type="InterPro" id="IPR011335">
    <property type="entry name" value="Restrct_endonuc-II-like"/>
</dbReference>
<dbReference type="InterPro" id="IPR009822">
    <property type="entry name" value="YaeQ"/>
</dbReference>
<dbReference type="InterPro" id="IPR038590">
    <property type="entry name" value="YaeQ_sf"/>
</dbReference>
<dbReference type="PANTHER" id="PTHR38784">
    <property type="entry name" value="SUCROSE PHOSPHORYLASE"/>
    <property type="match status" value="1"/>
</dbReference>
<dbReference type="PANTHER" id="PTHR38784:SF1">
    <property type="entry name" value="SUCROSE PHOSPHORYLASE"/>
    <property type="match status" value="1"/>
</dbReference>
<dbReference type="Pfam" id="PF07152">
    <property type="entry name" value="YaeQ"/>
    <property type="match status" value="1"/>
</dbReference>
<dbReference type="PIRSF" id="PIRSF011484">
    <property type="entry name" value="YaeQ"/>
    <property type="match status" value="1"/>
</dbReference>
<dbReference type="SMART" id="SM01322">
    <property type="entry name" value="YaeQ"/>
    <property type="match status" value="1"/>
</dbReference>
<dbReference type="SUPFAM" id="SSF52980">
    <property type="entry name" value="Restriction endonuclease-like"/>
    <property type="match status" value="1"/>
</dbReference>
<gene>
    <name type="primary">yaeQ</name>
    <name type="ordered locus">STY0264</name>
    <name type="ordered locus">t0241</name>
</gene>
<feature type="chain" id="PRO_0000168529" description="Uncharacterized protein YaeQ">
    <location>
        <begin position="1"/>
        <end position="181"/>
    </location>
</feature>
<sequence length="181" mass="20836">MALKATIYKAVVNVADLDRNRFLDAALTLARHPSETQERMMLRLLAWIKYADERLQFTRGLSAEDEPEAWLRNDHLGIDLWIELGLPDERRIKKACTQASDVALFAYNSRAAQIWWQQHQSKCAQFANLSVWYLDDGQLAQLSEFADRTMTLQATIQDGAIWLSDARNNLEIQLTAWQQPS</sequence>